<feature type="chain" id="PRO_0000439011" description="Ent-kaurenoic acid oxidase">
    <location>
        <begin position="1"/>
        <end position="506"/>
    </location>
</feature>
<feature type="transmembrane region" description="Helical" evidence="3">
    <location>
        <begin position="11"/>
        <end position="31"/>
    </location>
</feature>
<feature type="binding site" description="axial binding residue" evidence="2">
    <location>
        <position position="451"/>
    </location>
    <ligand>
        <name>heme</name>
        <dbReference type="ChEBI" id="CHEBI:30413"/>
    </ligand>
    <ligandPart>
        <name>Fe</name>
        <dbReference type="ChEBI" id="CHEBI:18248"/>
    </ligandPart>
</feature>
<gene>
    <name evidence="10" type="primary">KAO</name>
    <name evidence="8" type="synonym">CYP88A5</name>
    <name evidence="7" type="synonym">RPE1</name>
    <name evidence="13" type="ordered locus">Os06g0110000</name>
    <name evidence="8" type="ordered locus">LOC_Os06g02019</name>
    <name evidence="12" type="ORF">OSJNBa0004I20.18</name>
    <name evidence="11" type="ORF">P0514G12.42</name>
</gene>
<name>KAO_ORYSJ</name>
<protein>
    <recommendedName>
        <fullName evidence="8">Ent-kaurenoic acid oxidase</fullName>
        <shortName evidence="6">OsKAO</shortName>
        <ecNumber evidence="1">1.14.14.107</ecNumber>
    </recommendedName>
    <alternativeName>
        <fullName evidence="8">Cytochrome P450 88A5</fullName>
    </alternativeName>
    <alternativeName>
        <fullName evidence="7">Protein REDUCED POLLEN ELONGATION 1</fullName>
    </alternativeName>
</protein>
<comment type="function">
    <text evidence="5 9">Involved in gibberellin (GA) biosynthesis. Catalyzes three successive oxidations of ent-kaurenoic acid giving gibberellin 12 (GA12), a key step in GAs biosynthesis. GAs, which are involved many processes, including stem elongation, play a central role in plant development (Probable). Required for pollen germination and elongation (PubMed:18083909).</text>
</comment>
<comment type="catalytic activity">
    <reaction evidence="1">
        <text>ent-kaur-16-en-19-oate + 3 reduced [NADPH--hemoprotein reductase] + 3 O2 = gibberellin A12 + 3 oxidized [NADPH--hemoprotein reductase] + 4 H2O + 4 H(+)</text>
        <dbReference type="Rhea" id="RHEA:33219"/>
        <dbReference type="Rhea" id="RHEA-COMP:11964"/>
        <dbReference type="Rhea" id="RHEA-COMP:11965"/>
        <dbReference type="ChEBI" id="CHEBI:15377"/>
        <dbReference type="ChEBI" id="CHEBI:15378"/>
        <dbReference type="ChEBI" id="CHEBI:15379"/>
        <dbReference type="ChEBI" id="CHEBI:57297"/>
        <dbReference type="ChEBI" id="CHEBI:57618"/>
        <dbReference type="ChEBI" id="CHEBI:58210"/>
        <dbReference type="ChEBI" id="CHEBI:58627"/>
        <dbReference type="EC" id="1.14.14.107"/>
    </reaction>
    <physiologicalReaction direction="left-to-right" evidence="1">
        <dbReference type="Rhea" id="RHEA:33220"/>
    </physiologicalReaction>
</comment>
<comment type="catalytic activity">
    <reaction evidence="1">
        <text>ent-kaur-16-en-19-oate + reduced [NADPH--hemoprotein reductase] + O2 = ent-7alpha-hydroxykaur-16-en-19-oate + oxidized [NADPH--hemoprotein reductase] + H2O + H(+)</text>
        <dbReference type="Rhea" id="RHEA:19241"/>
        <dbReference type="Rhea" id="RHEA-COMP:11964"/>
        <dbReference type="Rhea" id="RHEA-COMP:11965"/>
        <dbReference type="ChEBI" id="CHEBI:15377"/>
        <dbReference type="ChEBI" id="CHEBI:15378"/>
        <dbReference type="ChEBI" id="CHEBI:15379"/>
        <dbReference type="ChEBI" id="CHEBI:57297"/>
        <dbReference type="ChEBI" id="CHEBI:57298"/>
        <dbReference type="ChEBI" id="CHEBI:57618"/>
        <dbReference type="ChEBI" id="CHEBI:58210"/>
    </reaction>
    <physiologicalReaction direction="left-to-right" evidence="1">
        <dbReference type="Rhea" id="RHEA:19242"/>
    </physiologicalReaction>
</comment>
<comment type="catalytic activity">
    <reaction evidence="1">
        <text>ent-7alpha-hydroxykaur-16-en-19-oate + reduced [NADPH--hemoprotein reductase] + O2 = gibberellin A12 aldehyde + oxidized [NADPH--hemoprotein reductase] + 2 H2O + H(+)</text>
        <dbReference type="Rhea" id="RHEA:22904"/>
        <dbReference type="Rhea" id="RHEA-COMP:11964"/>
        <dbReference type="Rhea" id="RHEA-COMP:11965"/>
        <dbReference type="ChEBI" id="CHEBI:15377"/>
        <dbReference type="ChEBI" id="CHEBI:15378"/>
        <dbReference type="ChEBI" id="CHEBI:15379"/>
        <dbReference type="ChEBI" id="CHEBI:57298"/>
        <dbReference type="ChEBI" id="CHEBI:57432"/>
        <dbReference type="ChEBI" id="CHEBI:57618"/>
        <dbReference type="ChEBI" id="CHEBI:58210"/>
    </reaction>
    <physiologicalReaction direction="left-to-right" evidence="1">
        <dbReference type="Rhea" id="RHEA:22905"/>
    </physiologicalReaction>
</comment>
<comment type="catalytic activity">
    <reaction evidence="1">
        <text>gibberellin A12 aldehyde + reduced [NADPH--hemoprotein reductase] + O2 = gibberellin A12 + oxidized [NADPH--hemoprotein reductase] + H2O + 2 H(+)</text>
        <dbReference type="Rhea" id="RHEA:22700"/>
        <dbReference type="Rhea" id="RHEA-COMP:11964"/>
        <dbReference type="Rhea" id="RHEA-COMP:11965"/>
        <dbReference type="ChEBI" id="CHEBI:15377"/>
        <dbReference type="ChEBI" id="CHEBI:15378"/>
        <dbReference type="ChEBI" id="CHEBI:15379"/>
        <dbReference type="ChEBI" id="CHEBI:57432"/>
        <dbReference type="ChEBI" id="CHEBI:57618"/>
        <dbReference type="ChEBI" id="CHEBI:58210"/>
        <dbReference type="ChEBI" id="CHEBI:58627"/>
    </reaction>
    <physiologicalReaction direction="left-to-right" evidence="1">
        <dbReference type="Rhea" id="RHEA:22701"/>
    </physiologicalReaction>
</comment>
<comment type="cofactor">
    <cofactor evidence="2">
        <name>heme</name>
        <dbReference type="ChEBI" id="CHEBI:30413"/>
    </cofactor>
</comment>
<comment type="pathway">
    <text evidence="8">Plant hormone biosynthesis; gibberellin biosynthesis.</text>
</comment>
<comment type="subcellular location">
    <subcellularLocation>
        <location evidence="1">Endoplasmic reticulum membrane</location>
        <topology evidence="3">Single-pass membrane protein</topology>
    </subcellularLocation>
</comment>
<comment type="tissue specificity">
    <text evidence="4">Expressed in roots and panicles. Expressed at low levels in vegetative shoot apices, leaf sheaths, leaf blades and stems.</text>
</comment>
<comment type="disruption phenotype">
    <text evidence="4">Severe dwarf phenotype without flower or seed development.</text>
</comment>
<comment type="similarity">
    <text evidence="8">Belongs to the cytochrome P450 family.</text>
</comment>
<reference key="1">
    <citation type="journal article" date="2005" name="Nature">
        <title>The map-based sequence of the rice genome.</title>
        <authorList>
            <consortium name="International rice genome sequencing project (IRGSP)"/>
        </authorList>
    </citation>
    <scope>NUCLEOTIDE SEQUENCE [LARGE SCALE GENOMIC DNA]</scope>
    <source>
        <strain>cv. Nipponbare</strain>
    </source>
</reference>
<reference key="2">
    <citation type="journal article" date="2008" name="Nucleic Acids Res.">
        <title>The rice annotation project database (RAP-DB): 2008 update.</title>
        <authorList>
            <consortium name="The rice annotation project (RAP)"/>
        </authorList>
    </citation>
    <scope>GENOME REANNOTATION</scope>
    <source>
        <strain>cv. Nipponbare</strain>
    </source>
</reference>
<reference key="3">
    <citation type="journal article" date="2013" name="Rice">
        <title>Improvement of the Oryza sativa Nipponbare reference genome using next generation sequence and optical map data.</title>
        <authorList>
            <person name="Kawahara Y."/>
            <person name="de la Bastide M."/>
            <person name="Hamilton J.P."/>
            <person name="Kanamori H."/>
            <person name="McCombie W.R."/>
            <person name="Ouyang S."/>
            <person name="Schwartz D.C."/>
            <person name="Tanaka T."/>
            <person name="Wu J."/>
            <person name="Zhou S."/>
            <person name="Childs K.L."/>
            <person name="Davidson R.M."/>
            <person name="Lin H."/>
            <person name="Quesada-Ocampo L."/>
            <person name="Vaillancourt B."/>
            <person name="Sakai H."/>
            <person name="Lee S.S."/>
            <person name="Kim J."/>
            <person name="Numa H."/>
            <person name="Itoh T."/>
            <person name="Buell C.R."/>
            <person name="Matsumoto T."/>
        </authorList>
    </citation>
    <scope>GENOME REANNOTATION</scope>
    <source>
        <strain>cv. Nipponbare</strain>
    </source>
</reference>
<reference key="4">
    <citation type="journal article" date="2009" name="BMC Evol. Biol.">
        <title>Evolutionary rate patterns of the gibberellin pathway genes.</title>
        <authorList>
            <person name="Yang Y.H."/>
            <person name="Zhang F.M."/>
            <person name="Ge S."/>
        </authorList>
    </citation>
    <scope>NUCLEOTIDE SEQUENCE [GENOMIC DNA] OF 128-478</scope>
</reference>
<reference key="5">
    <citation type="journal article" date="2004" name="Plant Physiol.">
        <title>An overview of gibberellin metabolism enzyme genes and their related mutants in rice.</title>
        <authorList>
            <person name="Sakamoto T."/>
            <person name="Miura K."/>
            <person name="Itoh H."/>
            <person name="Tatsumi T."/>
            <person name="Ueguchi-Tanaka M."/>
            <person name="Ishiyama K."/>
            <person name="Kobayashi M."/>
            <person name="Agrawal G.K."/>
            <person name="Takeda S."/>
            <person name="Abe K."/>
            <person name="Miyao A."/>
            <person name="Hirochika H."/>
            <person name="Kitano H."/>
            <person name="Ashikari M."/>
            <person name="Matsuoka M."/>
        </authorList>
    </citation>
    <scope>FUNCTION</scope>
    <scope>TISSUE SPECIFICITY</scope>
    <scope>DISRUPTION PHENOTYPE</scope>
</reference>
<reference key="6">
    <citation type="journal article" date="2007" name="Plant Cell">
        <title>Gibberellin regulates pollen viability and pollen tube growth in rice.</title>
        <authorList>
            <person name="Chhun T."/>
            <person name="Aya K."/>
            <person name="Asano K."/>
            <person name="Yamamoto E."/>
            <person name="Morinaka Y."/>
            <person name="Watanabe M."/>
            <person name="Kitano H."/>
            <person name="Ashikari M."/>
            <person name="Matsuoka M."/>
            <person name="Ueguchi-Tanaka M."/>
        </authorList>
    </citation>
    <scope>FUNCTION</scope>
</reference>
<sequence length="506" mass="57008">MVMEGMGMAAAWAAGDLWVLAAAVVAGVVLVDAVVRRAHDWVRVAALGAERRSRLPPGEMGWPMVGSMWAFLRAFKSGNPDAFIASFIRRFGRTGVYRTFMFSSPTILAVTPEACKQVLMDDEGFVTGWPKATVTLIGPKSFVNMSYDDHRRIRKLTAAPINGFDALTTYLSFIDQTVVASLRRWSSPESGQVEFLTELRRMTFKIIVQIFMSGADDATMEALERSYTDLNYGMRAMAINLPGFAYYRALRARRKLVSVLQGVLDGRRAAAAKGFKRSGAMDMMDRLIEAEDERGRRLADDEIVDVLIMYLNAGHESSGHITMWATVFLQENPDIFARAKAEQEEIMRSIPATQNGLTLRDFKKMHFLSQVVDETLRCVNISFVSFRQATRDIFVNGYLIPKGWKVQLWYRSVHMDDQVYPDPKMFNPSRWEGPPPKAGTFLPFGLGARLCPGNDLAKLEISVFLHHFLLGYKLKRANPKCRVRYLPHPRPVDNCLATITKVSDEH</sequence>
<keyword id="KW-0256">Endoplasmic reticulum</keyword>
<keyword id="KW-0349">Heme</keyword>
<keyword id="KW-0408">Iron</keyword>
<keyword id="KW-0472">Membrane</keyword>
<keyword id="KW-0479">Metal-binding</keyword>
<keyword id="KW-0503">Monooxygenase</keyword>
<keyword id="KW-0560">Oxidoreductase</keyword>
<keyword id="KW-1185">Reference proteome</keyword>
<keyword id="KW-0812">Transmembrane</keyword>
<keyword id="KW-1133">Transmembrane helix</keyword>
<proteinExistence type="evidence at transcript level"/>
<dbReference type="EC" id="1.14.14.107" evidence="1"/>
<dbReference type="EMBL" id="AP000616">
    <property type="protein sequence ID" value="BAD67695.1"/>
    <property type="molecule type" value="Genomic_DNA"/>
</dbReference>
<dbReference type="EMBL" id="AP002805">
    <property type="protein sequence ID" value="BAD67898.1"/>
    <property type="molecule type" value="Genomic_DNA"/>
</dbReference>
<dbReference type="EMBL" id="AP008212">
    <property type="protein sequence ID" value="BAF18493.1"/>
    <property type="molecule type" value="Genomic_DNA"/>
</dbReference>
<dbReference type="EMBL" id="AP014962">
    <property type="protein sequence ID" value="BAS95781.1"/>
    <property type="molecule type" value="Genomic_DNA"/>
</dbReference>
<dbReference type="EMBL" id="EU179422">
    <property type="protein sequence ID" value="ABY49048.1"/>
    <property type="molecule type" value="Genomic_DNA"/>
</dbReference>
<dbReference type="RefSeq" id="XP_015643774.1">
    <property type="nucleotide sequence ID" value="XM_015788288.1"/>
</dbReference>
<dbReference type="SMR" id="Q5VRM7"/>
<dbReference type="FunCoup" id="Q5VRM7">
    <property type="interactions" value="266"/>
</dbReference>
<dbReference type="STRING" id="39947.Q5VRM7"/>
<dbReference type="PaxDb" id="39947-Q5VRM7"/>
<dbReference type="EnsemblPlants" id="Os06t0110000-01">
    <property type="protein sequence ID" value="Os06t0110000-01"/>
    <property type="gene ID" value="Os06g0110000"/>
</dbReference>
<dbReference type="Gramene" id="Os06t0110000-01">
    <property type="protein sequence ID" value="Os06t0110000-01"/>
    <property type="gene ID" value="Os06g0110000"/>
</dbReference>
<dbReference type="KEGG" id="dosa:Os06g0110000"/>
<dbReference type="eggNOG" id="KOG0157">
    <property type="taxonomic scope" value="Eukaryota"/>
</dbReference>
<dbReference type="HOGENOM" id="CLU_001570_15_5_1"/>
<dbReference type="InParanoid" id="Q5VRM7"/>
<dbReference type="OMA" id="KLWEVYM"/>
<dbReference type="OrthoDB" id="1470350at2759"/>
<dbReference type="BRENDA" id="1.14.14.107">
    <property type="organism ID" value="4460"/>
</dbReference>
<dbReference type="PlantReactome" id="R-OSA-1119557">
    <property type="pathway name" value="GA12 biosynthesis"/>
</dbReference>
<dbReference type="UniPathway" id="UPA00390"/>
<dbReference type="Proteomes" id="UP000000763">
    <property type="component" value="Chromosome 6"/>
</dbReference>
<dbReference type="Proteomes" id="UP000059680">
    <property type="component" value="Chromosome 6"/>
</dbReference>
<dbReference type="GO" id="GO:0005783">
    <property type="term" value="C:endoplasmic reticulum"/>
    <property type="evidence" value="ECO:0000318"/>
    <property type="project" value="GO_Central"/>
</dbReference>
<dbReference type="GO" id="GO:0005789">
    <property type="term" value="C:endoplasmic reticulum membrane"/>
    <property type="evidence" value="ECO:0007669"/>
    <property type="project" value="UniProtKB-SubCell"/>
</dbReference>
<dbReference type="GO" id="GO:0051777">
    <property type="term" value="F:ent-kaurenoic acid monooxygenase activity"/>
    <property type="evidence" value="ECO:0000314"/>
    <property type="project" value="UniProtKB"/>
</dbReference>
<dbReference type="GO" id="GO:0020037">
    <property type="term" value="F:heme binding"/>
    <property type="evidence" value="ECO:0007669"/>
    <property type="project" value="InterPro"/>
</dbReference>
<dbReference type="GO" id="GO:0005506">
    <property type="term" value="F:iron ion binding"/>
    <property type="evidence" value="ECO:0007669"/>
    <property type="project" value="InterPro"/>
</dbReference>
<dbReference type="GO" id="GO:0009686">
    <property type="term" value="P:gibberellin biosynthetic process"/>
    <property type="evidence" value="ECO:0000314"/>
    <property type="project" value="UniProtKB"/>
</dbReference>
<dbReference type="GO" id="GO:0009685">
    <property type="term" value="P:gibberellin metabolic process"/>
    <property type="evidence" value="ECO:0000305"/>
    <property type="project" value="Gramene"/>
</dbReference>
<dbReference type="GO" id="GO:0009846">
    <property type="term" value="P:pollen germination"/>
    <property type="evidence" value="ECO:0000315"/>
    <property type="project" value="UniProtKB"/>
</dbReference>
<dbReference type="GO" id="GO:0048868">
    <property type="term" value="P:pollen tube development"/>
    <property type="evidence" value="ECO:0000318"/>
    <property type="project" value="GO_Central"/>
</dbReference>
<dbReference type="GO" id="GO:0009860">
    <property type="term" value="P:pollen tube growth"/>
    <property type="evidence" value="ECO:0000315"/>
    <property type="project" value="UniProtKB"/>
</dbReference>
<dbReference type="CDD" id="cd11043">
    <property type="entry name" value="CYP90-like"/>
    <property type="match status" value="1"/>
</dbReference>
<dbReference type="FunFam" id="1.10.630.10:FF:000052">
    <property type="entry name" value="Ent-kaurenoic acid oxidase"/>
    <property type="match status" value="1"/>
</dbReference>
<dbReference type="Gene3D" id="1.10.630.10">
    <property type="entry name" value="Cytochrome P450"/>
    <property type="match status" value="1"/>
</dbReference>
<dbReference type="InterPro" id="IPR001128">
    <property type="entry name" value="Cyt_P450"/>
</dbReference>
<dbReference type="InterPro" id="IPR002397">
    <property type="entry name" value="Cyt_P450_B"/>
</dbReference>
<dbReference type="InterPro" id="IPR017972">
    <property type="entry name" value="Cyt_P450_CS"/>
</dbReference>
<dbReference type="InterPro" id="IPR036396">
    <property type="entry name" value="Cyt_P450_sf"/>
</dbReference>
<dbReference type="PANTHER" id="PTHR24286">
    <property type="entry name" value="CYTOCHROME P450 26"/>
    <property type="match status" value="1"/>
</dbReference>
<dbReference type="PANTHER" id="PTHR24286:SF356">
    <property type="entry name" value="ENT-KAURENOIC ACID OXIDASE 2"/>
    <property type="match status" value="1"/>
</dbReference>
<dbReference type="Pfam" id="PF00067">
    <property type="entry name" value="p450"/>
    <property type="match status" value="1"/>
</dbReference>
<dbReference type="PRINTS" id="PR00359">
    <property type="entry name" value="BP450"/>
</dbReference>
<dbReference type="PRINTS" id="PR00385">
    <property type="entry name" value="P450"/>
</dbReference>
<dbReference type="SUPFAM" id="SSF48264">
    <property type="entry name" value="Cytochrome P450"/>
    <property type="match status" value="1"/>
</dbReference>
<dbReference type="PROSITE" id="PS00086">
    <property type="entry name" value="CYTOCHROME_P450"/>
    <property type="match status" value="1"/>
</dbReference>
<accession>Q5VRM7</accession>
<accession>D0PQ37</accession>
<evidence type="ECO:0000250" key="1">
    <source>
        <dbReference type="UniProtKB" id="O23051"/>
    </source>
</evidence>
<evidence type="ECO:0000250" key="2">
    <source>
        <dbReference type="UniProtKB" id="P04798"/>
    </source>
</evidence>
<evidence type="ECO:0000255" key="3"/>
<evidence type="ECO:0000269" key="4">
    <source>
    </source>
</evidence>
<evidence type="ECO:0000269" key="5">
    <source>
    </source>
</evidence>
<evidence type="ECO:0000303" key="6">
    <source>
    </source>
</evidence>
<evidence type="ECO:0000303" key="7">
    <source>
    </source>
</evidence>
<evidence type="ECO:0000305" key="8"/>
<evidence type="ECO:0000305" key="9">
    <source>
    </source>
</evidence>
<evidence type="ECO:0000312" key="10">
    <source>
        <dbReference type="EMBL" id="ABY49048.1"/>
    </source>
</evidence>
<evidence type="ECO:0000312" key="11">
    <source>
        <dbReference type="EMBL" id="BAD67695.1"/>
    </source>
</evidence>
<evidence type="ECO:0000312" key="12">
    <source>
        <dbReference type="EMBL" id="BAD67898.1"/>
    </source>
</evidence>
<evidence type="ECO:0000312" key="13">
    <source>
        <dbReference type="EMBL" id="BAF18493.1"/>
    </source>
</evidence>
<organism>
    <name type="scientific">Oryza sativa subsp. japonica</name>
    <name type="common">Rice</name>
    <dbReference type="NCBI Taxonomy" id="39947"/>
    <lineage>
        <taxon>Eukaryota</taxon>
        <taxon>Viridiplantae</taxon>
        <taxon>Streptophyta</taxon>
        <taxon>Embryophyta</taxon>
        <taxon>Tracheophyta</taxon>
        <taxon>Spermatophyta</taxon>
        <taxon>Magnoliopsida</taxon>
        <taxon>Liliopsida</taxon>
        <taxon>Poales</taxon>
        <taxon>Poaceae</taxon>
        <taxon>BOP clade</taxon>
        <taxon>Oryzoideae</taxon>
        <taxon>Oryzeae</taxon>
        <taxon>Oryzinae</taxon>
        <taxon>Oryza</taxon>
        <taxon>Oryza sativa</taxon>
    </lineage>
</organism>